<organism>
    <name type="scientific">Histophilus somni (strain 2336)</name>
    <name type="common">Haemophilus somnus</name>
    <dbReference type="NCBI Taxonomy" id="228400"/>
    <lineage>
        <taxon>Bacteria</taxon>
        <taxon>Pseudomonadati</taxon>
        <taxon>Pseudomonadota</taxon>
        <taxon>Gammaproteobacteria</taxon>
        <taxon>Pasteurellales</taxon>
        <taxon>Pasteurellaceae</taxon>
        <taxon>Histophilus</taxon>
    </lineage>
</organism>
<proteinExistence type="inferred from homology"/>
<reference key="1">
    <citation type="submission" date="2008-02" db="EMBL/GenBank/DDBJ databases">
        <title>Complete sequence of Haemophilus somnus 2336.</title>
        <authorList>
            <consortium name="US DOE Joint Genome Institute"/>
            <person name="Siddaramappa S."/>
            <person name="Duncan A.J."/>
            <person name="Challacombe J.F."/>
            <person name="Rainey D."/>
            <person name="Gillaspy A.F."/>
            <person name="Carson M."/>
            <person name="Gipson J."/>
            <person name="Gipson M."/>
            <person name="Bruce D."/>
            <person name="Detter J.C."/>
            <person name="Han C.S."/>
            <person name="Land M."/>
            <person name="Tapia R."/>
            <person name="Thompson L.S."/>
            <person name="Orvis J."/>
            <person name="Zaitshik J."/>
            <person name="Barnes G."/>
            <person name="Brettin T.S."/>
            <person name="Dyer D.W."/>
            <person name="Inzana T.J."/>
        </authorList>
    </citation>
    <scope>NUCLEOTIDE SEQUENCE [LARGE SCALE GENOMIC DNA]</scope>
    <source>
        <strain>2336</strain>
    </source>
</reference>
<feature type="chain" id="PRO_1000121893" description="Glutamate-1-semialdehyde 2,1-aminomutase">
    <location>
        <begin position="1"/>
        <end position="432"/>
    </location>
</feature>
<feature type="modified residue" description="N6-(pyridoxal phosphate)lysine" evidence="1">
    <location>
        <position position="265"/>
    </location>
</feature>
<keyword id="KW-0963">Cytoplasm</keyword>
<keyword id="KW-0413">Isomerase</keyword>
<keyword id="KW-0627">Porphyrin biosynthesis</keyword>
<keyword id="KW-0663">Pyridoxal phosphate</keyword>
<gene>
    <name evidence="1" type="primary">hemL</name>
    <name type="ordered locus">HSM_0850</name>
</gene>
<accession>B0UST3</accession>
<sequence length="432" mass="46703">MTTSATLFYRAQQVIPGGVNSPVRAFKGVGGTPVFIEKANGAYIFDIEGKQYIDYVGSWGPMILGHNHPSILSAVLKIAENGLSFGTPTPLEIELAELICQLVPSIEMVRMVNSGTEATMSAIRLARGYTKRDKILKFEGCYHGHSDSLLVKAGSGSLTLGQPSSPGVPEDFAKHTITCEYNNLQSVKNAFEQYPDQIACVIVEPVAGNMNCILPKQDFLQGLRQLCNEYGSLFIIDEVMTGFRVALGGAQSYYEVTPDLTTLGKVIGGGMPVGAFGGKKEIMQYIAPTGPVYQAGTLSGNPIAMSAGIACLNELKKEGNEQRLAMLTKKLALGLKNLANQHNIPLVVNYVGGMFGIFFTTQNEVTSYQQAIQCDIERFNLFFHKMLEQGVYLAPSAFEAGFMSLAHTDADIDRTLQAADIAFASLRSSSFS</sequence>
<dbReference type="EC" id="5.4.3.8" evidence="1"/>
<dbReference type="EMBL" id="CP000947">
    <property type="protein sequence ID" value="ACA32524.1"/>
    <property type="molecule type" value="Genomic_DNA"/>
</dbReference>
<dbReference type="RefSeq" id="WP_012341659.1">
    <property type="nucleotide sequence ID" value="NC_010519.1"/>
</dbReference>
<dbReference type="SMR" id="B0UST3"/>
<dbReference type="STRING" id="228400.HSM_0850"/>
<dbReference type="GeneID" id="31487137"/>
<dbReference type="KEGG" id="hsm:HSM_0850"/>
<dbReference type="HOGENOM" id="CLU_016922_1_5_6"/>
<dbReference type="UniPathway" id="UPA00251">
    <property type="reaction ID" value="UER00317"/>
</dbReference>
<dbReference type="GO" id="GO:0005737">
    <property type="term" value="C:cytoplasm"/>
    <property type="evidence" value="ECO:0007669"/>
    <property type="project" value="UniProtKB-SubCell"/>
</dbReference>
<dbReference type="GO" id="GO:0042286">
    <property type="term" value="F:glutamate-1-semialdehyde 2,1-aminomutase activity"/>
    <property type="evidence" value="ECO:0007669"/>
    <property type="project" value="UniProtKB-UniRule"/>
</dbReference>
<dbReference type="GO" id="GO:0030170">
    <property type="term" value="F:pyridoxal phosphate binding"/>
    <property type="evidence" value="ECO:0007669"/>
    <property type="project" value="InterPro"/>
</dbReference>
<dbReference type="GO" id="GO:0008483">
    <property type="term" value="F:transaminase activity"/>
    <property type="evidence" value="ECO:0007669"/>
    <property type="project" value="InterPro"/>
</dbReference>
<dbReference type="GO" id="GO:0006782">
    <property type="term" value="P:protoporphyrinogen IX biosynthetic process"/>
    <property type="evidence" value="ECO:0007669"/>
    <property type="project" value="UniProtKB-UniRule"/>
</dbReference>
<dbReference type="CDD" id="cd00610">
    <property type="entry name" value="OAT_like"/>
    <property type="match status" value="1"/>
</dbReference>
<dbReference type="FunFam" id="3.40.640.10:FF:000021">
    <property type="entry name" value="Glutamate-1-semialdehyde 2,1-aminomutase"/>
    <property type="match status" value="1"/>
</dbReference>
<dbReference type="Gene3D" id="3.90.1150.10">
    <property type="entry name" value="Aspartate Aminotransferase, domain 1"/>
    <property type="match status" value="1"/>
</dbReference>
<dbReference type="Gene3D" id="3.40.640.10">
    <property type="entry name" value="Type I PLP-dependent aspartate aminotransferase-like (Major domain)"/>
    <property type="match status" value="1"/>
</dbReference>
<dbReference type="HAMAP" id="MF_00375">
    <property type="entry name" value="HemL_aminotrans_3"/>
    <property type="match status" value="1"/>
</dbReference>
<dbReference type="InterPro" id="IPR004639">
    <property type="entry name" value="4pyrrol_synth_GluAld_NH2Trfase"/>
</dbReference>
<dbReference type="InterPro" id="IPR005814">
    <property type="entry name" value="Aminotrans_3"/>
</dbReference>
<dbReference type="InterPro" id="IPR049704">
    <property type="entry name" value="Aminotrans_3_PPA_site"/>
</dbReference>
<dbReference type="InterPro" id="IPR015424">
    <property type="entry name" value="PyrdxlP-dep_Trfase"/>
</dbReference>
<dbReference type="InterPro" id="IPR015421">
    <property type="entry name" value="PyrdxlP-dep_Trfase_major"/>
</dbReference>
<dbReference type="InterPro" id="IPR015422">
    <property type="entry name" value="PyrdxlP-dep_Trfase_small"/>
</dbReference>
<dbReference type="NCBIfam" id="TIGR00713">
    <property type="entry name" value="hemL"/>
    <property type="match status" value="1"/>
</dbReference>
<dbReference type="NCBIfam" id="NF000818">
    <property type="entry name" value="PRK00062.1"/>
    <property type="match status" value="1"/>
</dbReference>
<dbReference type="PANTHER" id="PTHR43713">
    <property type="entry name" value="GLUTAMATE-1-SEMIALDEHYDE 2,1-AMINOMUTASE"/>
    <property type="match status" value="1"/>
</dbReference>
<dbReference type="PANTHER" id="PTHR43713:SF3">
    <property type="entry name" value="GLUTAMATE-1-SEMIALDEHYDE 2,1-AMINOMUTASE 1, CHLOROPLASTIC-RELATED"/>
    <property type="match status" value="1"/>
</dbReference>
<dbReference type="Pfam" id="PF00202">
    <property type="entry name" value="Aminotran_3"/>
    <property type="match status" value="1"/>
</dbReference>
<dbReference type="SUPFAM" id="SSF53383">
    <property type="entry name" value="PLP-dependent transferases"/>
    <property type="match status" value="1"/>
</dbReference>
<dbReference type="PROSITE" id="PS00600">
    <property type="entry name" value="AA_TRANSFER_CLASS_3"/>
    <property type="match status" value="1"/>
</dbReference>
<evidence type="ECO:0000255" key="1">
    <source>
        <dbReference type="HAMAP-Rule" id="MF_00375"/>
    </source>
</evidence>
<protein>
    <recommendedName>
        <fullName evidence="1">Glutamate-1-semialdehyde 2,1-aminomutase</fullName>
        <shortName evidence="1">GSA</shortName>
        <ecNumber evidence="1">5.4.3.8</ecNumber>
    </recommendedName>
    <alternativeName>
        <fullName evidence="1">Glutamate-1-semialdehyde aminotransferase</fullName>
        <shortName evidence="1">GSA-AT</shortName>
    </alternativeName>
</protein>
<name>GSA_HISS2</name>
<comment type="catalytic activity">
    <reaction evidence="1">
        <text>(S)-4-amino-5-oxopentanoate = 5-aminolevulinate</text>
        <dbReference type="Rhea" id="RHEA:14265"/>
        <dbReference type="ChEBI" id="CHEBI:57501"/>
        <dbReference type="ChEBI" id="CHEBI:356416"/>
        <dbReference type="EC" id="5.4.3.8"/>
    </reaction>
</comment>
<comment type="cofactor">
    <cofactor evidence="1">
        <name>pyridoxal 5'-phosphate</name>
        <dbReference type="ChEBI" id="CHEBI:597326"/>
    </cofactor>
</comment>
<comment type="pathway">
    <text evidence="1">Porphyrin-containing compound metabolism; protoporphyrin-IX biosynthesis; 5-aminolevulinate from L-glutamyl-tRNA(Glu): step 2/2.</text>
</comment>
<comment type="subunit">
    <text evidence="1">Homodimer.</text>
</comment>
<comment type="subcellular location">
    <subcellularLocation>
        <location evidence="1">Cytoplasm</location>
    </subcellularLocation>
</comment>
<comment type="similarity">
    <text evidence="1">Belongs to the class-III pyridoxal-phosphate-dependent aminotransferase family. HemL subfamily.</text>
</comment>